<reference key="1">
    <citation type="journal article" date="2006" name="Proc. Natl. Acad. Sci. U.S.A.">
        <title>Genome reduction in Leptospira borgpetersenii reflects limited transmission potential.</title>
        <authorList>
            <person name="Bulach D.M."/>
            <person name="Zuerner R.L."/>
            <person name="Wilson P."/>
            <person name="Seemann T."/>
            <person name="McGrath A."/>
            <person name="Cullen P.A."/>
            <person name="Davis J."/>
            <person name="Johnson M."/>
            <person name="Kuczek E."/>
            <person name="Alt D.P."/>
            <person name="Peterson-Burch B."/>
            <person name="Coppel R.L."/>
            <person name="Rood J.I."/>
            <person name="Davies J.K."/>
            <person name="Adler B."/>
        </authorList>
    </citation>
    <scope>NUCLEOTIDE SEQUENCE [LARGE SCALE GENOMIC DNA]</scope>
    <source>
        <strain>L550</strain>
    </source>
</reference>
<organism>
    <name type="scientific">Leptospira borgpetersenii serovar Hardjo-bovis (strain L550)</name>
    <dbReference type="NCBI Taxonomy" id="355276"/>
    <lineage>
        <taxon>Bacteria</taxon>
        <taxon>Pseudomonadati</taxon>
        <taxon>Spirochaetota</taxon>
        <taxon>Spirochaetia</taxon>
        <taxon>Leptospirales</taxon>
        <taxon>Leptospiraceae</taxon>
        <taxon>Leptospira</taxon>
    </lineage>
</organism>
<keyword id="KW-0687">Ribonucleoprotein</keyword>
<keyword id="KW-0689">Ribosomal protein</keyword>
<keyword id="KW-0694">RNA-binding</keyword>
<keyword id="KW-0699">rRNA-binding</keyword>
<accession>Q052J9</accession>
<sequence length="149" mass="16639">MRVILQKDVINLGDAGDLREVADGYARNFLFPKRLAVRANEGNTKAAFHQKKLGELKKEKRKKAMEAVATNLNGKEYDILVKTGGGEKLFGAVTPIDVASILKKNGFELDKRKIEIAEPIRNLGSYKIKIRLAEGIQPVITLHVKKEEE</sequence>
<evidence type="ECO:0000255" key="1">
    <source>
        <dbReference type="HAMAP-Rule" id="MF_00503"/>
    </source>
</evidence>
<evidence type="ECO:0000305" key="2"/>
<proteinExistence type="inferred from homology"/>
<comment type="function">
    <text evidence="1">Binds to the 23S rRNA.</text>
</comment>
<comment type="similarity">
    <text evidence="1">Belongs to the bacterial ribosomal protein bL9 family.</text>
</comment>
<protein>
    <recommendedName>
        <fullName evidence="1">Large ribosomal subunit protein bL9</fullName>
    </recommendedName>
    <alternativeName>
        <fullName evidence="2">50S ribosomal protein L9</fullName>
    </alternativeName>
</protein>
<feature type="chain" id="PRO_1000014802" description="Large ribosomal subunit protein bL9">
    <location>
        <begin position="1"/>
        <end position="149"/>
    </location>
</feature>
<dbReference type="EMBL" id="CP000348">
    <property type="protein sequence ID" value="ABJ78746.1"/>
    <property type="molecule type" value="Genomic_DNA"/>
</dbReference>
<dbReference type="RefSeq" id="WP_011669981.1">
    <property type="nucleotide sequence ID" value="NC_008508.1"/>
</dbReference>
<dbReference type="SMR" id="Q052J9"/>
<dbReference type="KEGG" id="lbl:LBL_1248"/>
<dbReference type="PATRIC" id="fig|355276.3.peg.1598"/>
<dbReference type="HOGENOM" id="CLU_078938_3_0_12"/>
<dbReference type="GO" id="GO:1990904">
    <property type="term" value="C:ribonucleoprotein complex"/>
    <property type="evidence" value="ECO:0007669"/>
    <property type="project" value="UniProtKB-KW"/>
</dbReference>
<dbReference type="GO" id="GO:0005840">
    <property type="term" value="C:ribosome"/>
    <property type="evidence" value="ECO:0007669"/>
    <property type="project" value="UniProtKB-KW"/>
</dbReference>
<dbReference type="GO" id="GO:0019843">
    <property type="term" value="F:rRNA binding"/>
    <property type="evidence" value="ECO:0007669"/>
    <property type="project" value="UniProtKB-UniRule"/>
</dbReference>
<dbReference type="GO" id="GO:0003735">
    <property type="term" value="F:structural constituent of ribosome"/>
    <property type="evidence" value="ECO:0007669"/>
    <property type="project" value="InterPro"/>
</dbReference>
<dbReference type="GO" id="GO:0006412">
    <property type="term" value="P:translation"/>
    <property type="evidence" value="ECO:0007669"/>
    <property type="project" value="UniProtKB-UniRule"/>
</dbReference>
<dbReference type="FunFam" id="3.40.5.10:FF:000008">
    <property type="entry name" value="50S ribosomal protein L9"/>
    <property type="match status" value="1"/>
</dbReference>
<dbReference type="Gene3D" id="3.10.430.100">
    <property type="entry name" value="Ribosomal protein L9, C-terminal domain"/>
    <property type="match status" value="1"/>
</dbReference>
<dbReference type="Gene3D" id="3.40.5.10">
    <property type="entry name" value="Ribosomal protein L9, N-terminal domain"/>
    <property type="match status" value="1"/>
</dbReference>
<dbReference type="HAMAP" id="MF_00503">
    <property type="entry name" value="Ribosomal_bL9"/>
    <property type="match status" value="1"/>
</dbReference>
<dbReference type="InterPro" id="IPR000244">
    <property type="entry name" value="Ribosomal_bL9"/>
</dbReference>
<dbReference type="InterPro" id="IPR009027">
    <property type="entry name" value="Ribosomal_bL9/RNase_H1_N"/>
</dbReference>
<dbReference type="InterPro" id="IPR020594">
    <property type="entry name" value="Ribosomal_bL9_bac/chp"/>
</dbReference>
<dbReference type="InterPro" id="IPR020069">
    <property type="entry name" value="Ribosomal_bL9_C"/>
</dbReference>
<dbReference type="InterPro" id="IPR036791">
    <property type="entry name" value="Ribosomal_bL9_C_sf"/>
</dbReference>
<dbReference type="InterPro" id="IPR020070">
    <property type="entry name" value="Ribosomal_bL9_N"/>
</dbReference>
<dbReference type="InterPro" id="IPR036935">
    <property type="entry name" value="Ribosomal_bL9_N_sf"/>
</dbReference>
<dbReference type="NCBIfam" id="TIGR00158">
    <property type="entry name" value="L9"/>
    <property type="match status" value="1"/>
</dbReference>
<dbReference type="PANTHER" id="PTHR21368">
    <property type="entry name" value="50S RIBOSOMAL PROTEIN L9"/>
    <property type="match status" value="1"/>
</dbReference>
<dbReference type="Pfam" id="PF03948">
    <property type="entry name" value="Ribosomal_L9_C"/>
    <property type="match status" value="1"/>
</dbReference>
<dbReference type="Pfam" id="PF01281">
    <property type="entry name" value="Ribosomal_L9_N"/>
    <property type="match status" value="1"/>
</dbReference>
<dbReference type="SUPFAM" id="SSF55658">
    <property type="entry name" value="L9 N-domain-like"/>
    <property type="match status" value="1"/>
</dbReference>
<dbReference type="SUPFAM" id="SSF55653">
    <property type="entry name" value="Ribosomal protein L9 C-domain"/>
    <property type="match status" value="1"/>
</dbReference>
<dbReference type="PROSITE" id="PS00651">
    <property type="entry name" value="RIBOSOMAL_L9"/>
    <property type="match status" value="1"/>
</dbReference>
<gene>
    <name evidence="1" type="primary">rplI</name>
    <name type="ordered locus">LBL_1248</name>
</gene>
<name>RL9_LEPBL</name>